<proteinExistence type="inferred from homology"/>
<reference key="1">
    <citation type="journal article" date="2009" name="J. Bacteriol.">
        <title>The complete genome sequence of Helicobacter pylori strain G27.</title>
        <authorList>
            <person name="Baltrus D.A."/>
            <person name="Amieva M.R."/>
            <person name="Covacci A."/>
            <person name="Lowe T.M."/>
            <person name="Merrell D.S."/>
            <person name="Ottemann K.M."/>
            <person name="Stein M."/>
            <person name="Salama N.R."/>
            <person name="Guillemin K."/>
        </authorList>
    </citation>
    <scope>NUCLEOTIDE SEQUENCE [LARGE SCALE GENOMIC DNA]</scope>
    <source>
        <strain>G27</strain>
    </source>
</reference>
<gene>
    <name evidence="1" type="primary">serS</name>
    <name type="ordered locus">HPG27_1403</name>
</gene>
<protein>
    <recommendedName>
        <fullName evidence="1">Serine--tRNA ligase</fullName>
        <ecNumber evidence="1">6.1.1.11</ecNumber>
    </recommendedName>
    <alternativeName>
        <fullName evidence="1">Seryl-tRNA synthetase</fullName>
        <shortName evidence="1">SerRS</shortName>
    </alternativeName>
    <alternativeName>
        <fullName evidence="1">Seryl-tRNA(Ser/Sec) synthetase</fullName>
    </alternativeName>
</protein>
<evidence type="ECO:0000255" key="1">
    <source>
        <dbReference type="HAMAP-Rule" id="MF_00176"/>
    </source>
</evidence>
<comment type="function">
    <text evidence="1">Catalyzes the attachment of serine to tRNA(Ser). Is also able to aminoacylate tRNA(Sec) with serine, to form the misacylated tRNA L-seryl-tRNA(Sec), which will be further converted into selenocysteinyl-tRNA(Sec).</text>
</comment>
<comment type="catalytic activity">
    <reaction evidence="1">
        <text>tRNA(Ser) + L-serine + ATP = L-seryl-tRNA(Ser) + AMP + diphosphate + H(+)</text>
        <dbReference type="Rhea" id="RHEA:12292"/>
        <dbReference type="Rhea" id="RHEA-COMP:9669"/>
        <dbReference type="Rhea" id="RHEA-COMP:9703"/>
        <dbReference type="ChEBI" id="CHEBI:15378"/>
        <dbReference type="ChEBI" id="CHEBI:30616"/>
        <dbReference type="ChEBI" id="CHEBI:33019"/>
        <dbReference type="ChEBI" id="CHEBI:33384"/>
        <dbReference type="ChEBI" id="CHEBI:78442"/>
        <dbReference type="ChEBI" id="CHEBI:78533"/>
        <dbReference type="ChEBI" id="CHEBI:456215"/>
        <dbReference type="EC" id="6.1.1.11"/>
    </reaction>
</comment>
<comment type="catalytic activity">
    <reaction evidence="1">
        <text>tRNA(Sec) + L-serine + ATP = L-seryl-tRNA(Sec) + AMP + diphosphate + H(+)</text>
        <dbReference type="Rhea" id="RHEA:42580"/>
        <dbReference type="Rhea" id="RHEA-COMP:9742"/>
        <dbReference type="Rhea" id="RHEA-COMP:10128"/>
        <dbReference type="ChEBI" id="CHEBI:15378"/>
        <dbReference type="ChEBI" id="CHEBI:30616"/>
        <dbReference type="ChEBI" id="CHEBI:33019"/>
        <dbReference type="ChEBI" id="CHEBI:33384"/>
        <dbReference type="ChEBI" id="CHEBI:78442"/>
        <dbReference type="ChEBI" id="CHEBI:78533"/>
        <dbReference type="ChEBI" id="CHEBI:456215"/>
        <dbReference type="EC" id="6.1.1.11"/>
    </reaction>
</comment>
<comment type="pathway">
    <text evidence="1">Aminoacyl-tRNA biosynthesis; selenocysteinyl-tRNA(Sec) biosynthesis; L-seryl-tRNA(Sec) from L-serine and tRNA(Sec): step 1/1.</text>
</comment>
<comment type="subunit">
    <text evidence="1">Homodimer. The tRNA molecule binds across the dimer.</text>
</comment>
<comment type="subcellular location">
    <subcellularLocation>
        <location evidence="1">Cytoplasm</location>
    </subcellularLocation>
</comment>
<comment type="domain">
    <text evidence="1">Consists of two distinct domains, a catalytic core and a N-terminal extension that is involved in tRNA binding.</text>
</comment>
<comment type="similarity">
    <text evidence="1">Belongs to the class-II aminoacyl-tRNA synthetase family. Type-1 seryl-tRNA synthetase subfamily.</text>
</comment>
<dbReference type="EC" id="6.1.1.11" evidence="1"/>
<dbReference type="EMBL" id="CP001173">
    <property type="protein sequence ID" value="ACI28148.1"/>
    <property type="molecule type" value="Genomic_DNA"/>
</dbReference>
<dbReference type="RefSeq" id="WP_000567092.1">
    <property type="nucleotide sequence ID" value="NC_011333.1"/>
</dbReference>
<dbReference type="SMR" id="B5Z999"/>
<dbReference type="KEGG" id="hpg:HPG27_1403"/>
<dbReference type="HOGENOM" id="CLU_023797_1_1_7"/>
<dbReference type="UniPathway" id="UPA00906">
    <property type="reaction ID" value="UER00895"/>
</dbReference>
<dbReference type="Proteomes" id="UP000001735">
    <property type="component" value="Chromosome"/>
</dbReference>
<dbReference type="GO" id="GO:0005737">
    <property type="term" value="C:cytoplasm"/>
    <property type="evidence" value="ECO:0007669"/>
    <property type="project" value="UniProtKB-SubCell"/>
</dbReference>
<dbReference type="GO" id="GO:0005524">
    <property type="term" value="F:ATP binding"/>
    <property type="evidence" value="ECO:0007669"/>
    <property type="project" value="UniProtKB-UniRule"/>
</dbReference>
<dbReference type="GO" id="GO:0004828">
    <property type="term" value="F:serine-tRNA ligase activity"/>
    <property type="evidence" value="ECO:0007669"/>
    <property type="project" value="UniProtKB-UniRule"/>
</dbReference>
<dbReference type="GO" id="GO:0016260">
    <property type="term" value="P:selenocysteine biosynthetic process"/>
    <property type="evidence" value="ECO:0007669"/>
    <property type="project" value="UniProtKB-UniRule"/>
</dbReference>
<dbReference type="GO" id="GO:0006434">
    <property type="term" value="P:seryl-tRNA aminoacylation"/>
    <property type="evidence" value="ECO:0007669"/>
    <property type="project" value="UniProtKB-UniRule"/>
</dbReference>
<dbReference type="CDD" id="cd00770">
    <property type="entry name" value="SerRS_core"/>
    <property type="match status" value="1"/>
</dbReference>
<dbReference type="Gene3D" id="3.30.930.10">
    <property type="entry name" value="Bira Bifunctional Protein, Domain 2"/>
    <property type="match status" value="1"/>
</dbReference>
<dbReference type="Gene3D" id="1.10.287.40">
    <property type="entry name" value="Serine-tRNA synthetase, tRNA binding domain"/>
    <property type="match status" value="1"/>
</dbReference>
<dbReference type="HAMAP" id="MF_00176">
    <property type="entry name" value="Ser_tRNA_synth_type1"/>
    <property type="match status" value="1"/>
</dbReference>
<dbReference type="InterPro" id="IPR002314">
    <property type="entry name" value="aa-tRNA-synt_IIb"/>
</dbReference>
<dbReference type="InterPro" id="IPR006195">
    <property type="entry name" value="aa-tRNA-synth_II"/>
</dbReference>
<dbReference type="InterPro" id="IPR045864">
    <property type="entry name" value="aa-tRNA-synth_II/BPL/LPL"/>
</dbReference>
<dbReference type="InterPro" id="IPR002317">
    <property type="entry name" value="Ser-tRNA-ligase_type_1"/>
</dbReference>
<dbReference type="InterPro" id="IPR015866">
    <property type="entry name" value="Ser-tRNA-synth_1_N"/>
</dbReference>
<dbReference type="InterPro" id="IPR042103">
    <property type="entry name" value="SerRS_1_N_sf"/>
</dbReference>
<dbReference type="InterPro" id="IPR033729">
    <property type="entry name" value="SerRS_core"/>
</dbReference>
<dbReference type="InterPro" id="IPR010978">
    <property type="entry name" value="tRNA-bd_arm"/>
</dbReference>
<dbReference type="NCBIfam" id="TIGR00414">
    <property type="entry name" value="serS"/>
    <property type="match status" value="1"/>
</dbReference>
<dbReference type="PANTHER" id="PTHR43697:SF1">
    <property type="entry name" value="SERINE--TRNA LIGASE"/>
    <property type="match status" value="1"/>
</dbReference>
<dbReference type="PANTHER" id="PTHR43697">
    <property type="entry name" value="SERYL-TRNA SYNTHETASE"/>
    <property type="match status" value="1"/>
</dbReference>
<dbReference type="Pfam" id="PF02403">
    <property type="entry name" value="Seryl_tRNA_N"/>
    <property type="match status" value="1"/>
</dbReference>
<dbReference type="Pfam" id="PF00587">
    <property type="entry name" value="tRNA-synt_2b"/>
    <property type="match status" value="1"/>
</dbReference>
<dbReference type="PIRSF" id="PIRSF001529">
    <property type="entry name" value="Ser-tRNA-synth_IIa"/>
    <property type="match status" value="1"/>
</dbReference>
<dbReference type="PRINTS" id="PR00981">
    <property type="entry name" value="TRNASYNTHSER"/>
</dbReference>
<dbReference type="SUPFAM" id="SSF55681">
    <property type="entry name" value="Class II aaRS and biotin synthetases"/>
    <property type="match status" value="1"/>
</dbReference>
<dbReference type="SUPFAM" id="SSF46589">
    <property type="entry name" value="tRNA-binding arm"/>
    <property type="match status" value="1"/>
</dbReference>
<dbReference type="PROSITE" id="PS50862">
    <property type="entry name" value="AA_TRNA_LIGASE_II"/>
    <property type="match status" value="1"/>
</dbReference>
<keyword id="KW-0030">Aminoacyl-tRNA synthetase</keyword>
<keyword id="KW-0067">ATP-binding</keyword>
<keyword id="KW-0963">Cytoplasm</keyword>
<keyword id="KW-0436">Ligase</keyword>
<keyword id="KW-0547">Nucleotide-binding</keyword>
<keyword id="KW-0648">Protein biosynthesis</keyword>
<keyword id="KW-1185">Reference proteome</keyword>
<sequence>MIDRKLLLQDFDKVALSLKKRNHAMDDELERLCEVIVHYKKQLIELEGLQAFQNKVSKEFGIKMAQKADTSDLKKELENNKIKLNELSKSVGELEQQIDLKLSIIPNLVDEKTPLGANEEDNIEIKKILTPRVFTFKPKEHFELAQQNGWIDFEGGVKLAKSRFSVIRGFGAKIYRALIHLMLDFNEKNGFEIIYTPALVNEKMLFGTGQLPKFKEDIFKIENENLYLIPTAEVTLTNLYNDTIISVENLPIKMTAHTPCFRSEAGSAGKDTRGMIRQHQFDKVELVAITHPKESDVMQEHMLESASEILKALELPHRFVQLCSADLGFSASNTIDIEVWLPGQNCYREISSVSNTRDFQARRAKIRFKENQKNQLAHTLNGSSLAVGRTMVALMENHQQADGSIHIPKALEKYL</sequence>
<organism>
    <name type="scientific">Helicobacter pylori (strain G27)</name>
    <dbReference type="NCBI Taxonomy" id="563041"/>
    <lineage>
        <taxon>Bacteria</taxon>
        <taxon>Pseudomonadati</taxon>
        <taxon>Campylobacterota</taxon>
        <taxon>Epsilonproteobacteria</taxon>
        <taxon>Campylobacterales</taxon>
        <taxon>Helicobacteraceae</taxon>
        <taxon>Helicobacter</taxon>
    </lineage>
</organism>
<accession>B5Z999</accession>
<name>SYS_HELPG</name>
<feature type="chain" id="PRO_1000098076" description="Serine--tRNA ligase">
    <location>
        <begin position="1"/>
        <end position="415"/>
    </location>
</feature>
<feature type="binding site" evidence="1">
    <location>
        <begin position="231"/>
        <end position="233"/>
    </location>
    <ligand>
        <name>L-serine</name>
        <dbReference type="ChEBI" id="CHEBI:33384"/>
    </ligand>
</feature>
<feature type="binding site" evidence="1">
    <location>
        <begin position="262"/>
        <end position="264"/>
    </location>
    <ligand>
        <name>ATP</name>
        <dbReference type="ChEBI" id="CHEBI:30616"/>
    </ligand>
</feature>
<feature type="binding site" evidence="1">
    <location>
        <position position="285"/>
    </location>
    <ligand>
        <name>L-serine</name>
        <dbReference type="ChEBI" id="CHEBI:33384"/>
    </ligand>
</feature>
<feature type="binding site" evidence="1">
    <location>
        <begin position="349"/>
        <end position="352"/>
    </location>
    <ligand>
        <name>ATP</name>
        <dbReference type="ChEBI" id="CHEBI:30616"/>
    </ligand>
</feature>
<feature type="binding site" evidence="1">
    <location>
        <position position="383"/>
    </location>
    <ligand>
        <name>L-serine</name>
        <dbReference type="ChEBI" id="CHEBI:33384"/>
    </ligand>
</feature>